<organism>
    <name type="scientific">Pan troglodytes</name>
    <name type="common">Chimpanzee</name>
    <dbReference type="NCBI Taxonomy" id="9598"/>
    <lineage>
        <taxon>Eukaryota</taxon>
        <taxon>Metazoa</taxon>
        <taxon>Chordata</taxon>
        <taxon>Craniata</taxon>
        <taxon>Vertebrata</taxon>
        <taxon>Euteleostomi</taxon>
        <taxon>Mammalia</taxon>
        <taxon>Eutheria</taxon>
        <taxon>Euarchontoglires</taxon>
        <taxon>Primates</taxon>
        <taxon>Haplorrhini</taxon>
        <taxon>Catarrhini</taxon>
        <taxon>Hominidae</taxon>
        <taxon>Pan</taxon>
    </lineage>
</organism>
<comment type="function">
    <text evidence="1">This is one of the three pore-forming subunits of the heterotrimeric epithelial sodium channel (ENaC), a critical regulator of sodium balance and fluid homeostasis. ENaC operates in epithelial tissues, where it mediates the electrodiffusion of sodium ions from extracellular fluid through the apical membrane of cells, with water following osmotically. It plays a key role in maintaining sodium homeostasis through electrogenic sodium reabsorption in the kidneys. Additionally, ENaC is essential for airway surface liquid homeostasis, which is crucial for proper mucus clearance.</text>
</comment>
<comment type="catalytic activity">
    <reaction evidence="1">
        <text>Na(+)(in) = Na(+)(out)</text>
        <dbReference type="Rhea" id="RHEA:34963"/>
        <dbReference type="ChEBI" id="CHEBI:29101"/>
    </reaction>
</comment>
<comment type="activity regulation">
    <text evidence="1">Originally identified and characterized by its inhibition by the diuretic drug amiloride.</text>
</comment>
<comment type="subunit">
    <text evidence="1">Heterotrimer; containing an alpha/SCNN1A, a beta/SCNN1B and a gamma/SCNN1G subunit. Interacts with WWP1 (via WW domains). Interacts with WWP2 (via WW domains); inhibits the channel. Interacts with BPIFA1; the interaction is indirect via SCNN1B and inhibits the proteolytic processing of SCNN1A and SCNN1G and the activation of ENaC (By similarity). Interacts with the full-length immature form of PCSK9 (pro-PCSK9).</text>
</comment>
<comment type="subcellular location">
    <subcellularLocation>
        <location evidence="2">Apical cell membrane</location>
        <topology evidence="2">Multi-pass membrane protein</topology>
    </subcellularLocation>
    <subcellularLocation>
        <location evidence="1">Cell projection</location>
        <location evidence="1">Cilium</location>
    </subcellularLocation>
    <subcellularLocation>
        <location evidence="1">Cytoplasmic granule</location>
    </subcellularLocation>
    <subcellularLocation>
        <location evidence="1">Cytoplasm</location>
    </subcellularLocation>
    <subcellularLocation>
        <location evidence="2">Cytoplasmic vesicle</location>
        <location evidence="2">Secretory vesicle</location>
        <location evidence="2">Acrosome</location>
    </subcellularLocation>
    <subcellularLocation>
        <location evidence="2">Cell projection</location>
        <location evidence="2">Cilium</location>
        <location evidence="2">Flagellum</location>
    </subcellularLocation>
    <text evidence="1 2">In the oviduct and bronchus, located on cilia in multi-ciliated cells. In endometrial non-ciliated epithelial cells, restricted to apical surfaces. In epidermis, located nearly uniformly in the cytoplasm in a granular distribution. In sebaceous glands, observed only in the cytoplasmic space in between the lipid vesicles. In eccrine sweat glands, mainly located at the apical surface of the cells facing the lumen. In skin, in arrector pili muscle cells and in adipocytes, located in the cytoplasm and colocalized with actin fibers. In spermatogonia, spermatocytes and round spermatids, located in the cytoplasm. Prior to spermiation, location shifts from the cytoplasm to the spermatid tail. In spermatozoa, localizes at the acrosome and the central region of the sperm flagellum.</text>
</comment>
<comment type="PTM">
    <text evidence="1">Ubiquitinated. Can be ubiquitinated at multiple sites and undergo monoubiquitination and polyubiquitination. Ubiquitination by NEDD4 or NEDD4L inhibits the ENaC channel through endocytosis, intracellular retention and degradation of its individual subunits.</text>
</comment>
<comment type="PTM">
    <text evidence="2">N-glycosylated.</text>
</comment>
<comment type="PTM">
    <text evidence="1 3">ENaC is activated through the proteolytic maturation of its subunits. Furin cleaves the SCNN1A subunit, which results in a stepwise increase in the open probability of the channel due to the release of an inhibitory tract (By similarity). BPIFA1, which is recruited by the SCNN1B subunit, prevents the proteolytic activation of ENaC (By similarity).</text>
</comment>
<comment type="similarity">
    <text evidence="6">Belongs to the amiloride-sensitive sodium channel (TC 1.A.6) family. SCNN1A subfamily.</text>
</comment>
<gene>
    <name evidence="1" type="primary">SCNN1A</name>
</gene>
<evidence type="ECO:0000250" key="1">
    <source>
        <dbReference type="UniProtKB" id="P37088"/>
    </source>
</evidence>
<evidence type="ECO:0000250" key="2">
    <source>
        <dbReference type="UniProtKB" id="P37089"/>
    </source>
</evidence>
<evidence type="ECO:0000250" key="3">
    <source>
        <dbReference type="UniProtKB" id="Q61180"/>
    </source>
</evidence>
<evidence type="ECO:0000255" key="4"/>
<evidence type="ECO:0000256" key="5">
    <source>
        <dbReference type="SAM" id="MobiDB-lite"/>
    </source>
</evidence>
<evidence type="ECO:0000305" key="6"/>
<accession>H2Q5A1</accession>
<proteinExistence type="inferred from homology"/>
<sequence>MSSIKGNKLEEQGPRPLQPTPGLMEGNKLEEQDSSPPQSTPGLMKGDKREEQGLGPEPAAPQQPTAEEEALIEFHRSYRELFEFFCNNTTIHGAIRLVCSQHNRMKTAFWAVLWLCTFGMMYWQFGLLFGEYFSYPVSLNINLNSDKLVFPAVTICTLNPYRYPEIKEELEELDRITEQTLFDLYKYSSFTTLVAGSRSRRDLRGTLPHPLQRLRVPPPPHGARRARSVASSVRDNNPQVDWKDWKIGFQLCNQNKSDCFYQTYSSGVDAVREWYRFHYINILSRLPETLPSLEKDTLGNFIFACRFNQVSCNQANYSHFHHPMYGNCYTFNDKNNSNLWMSSMPGINNGLSLMLRAEQNDFIPLLSTVTGARVMVHGQDEPAFMDDGGFNLRPGVETSISMRKETLDRLGGDYGDCTKNGSDVPVENLYPSKYTQQVCIHSCFQESMIKECGCAYIFYPRPQNVEYCDYRKHSSWGYCYYKLQVDFSSDHLGCFTKCRKPCSVTSYQLSAGYSRWPSVTSQEWVFQMLSRQNNYTVNNKRNGVAKVNIFFKELNYKTNSESPSVTMVTLLSNLGSQWSLWFGSSVLSVVEMAELIFDLLVITFLMLLRRFRSRYWSPGRGGRGAQEVASTLASSPPSHFCPHPTSLSLSQPGPAPSPALTAPPPAYATLGPRPSPGGSTGAGSSACPLGGP</sequence>
<reference key="1">
    <citation type="journal article" date="2005" name="Nature">
        <title>Initial sequence of the chimpanzee genome and comparison with the human genome.</title>
        <authorList>
            <consortium name="Chimpanzee sequencing and analysis consortium"/>
        </authorList>
    </citation>
    <scope>NUCLEOTIDE SEQUENCE [LARGE SCALE GENOMIC DNA]</scope>
</reference>
<feature type="chain" id="PRO_0000432714" description="Epithelial sodium channel subunit alpha">
    <location>
        <begin position="1"/>
        <end position="692"/>
    </location>
</feature>
<feature type="topological domain" description="Cytoplasmic" evidence="2">
    <location>
        <begin position="1"/>
        <end position="108"/>
    </location>
</feature>
<feature type="transmembrane region" description="Helical; Name=1" evidence="4">
    <location>
        <begin position="109"/>
        <end position="129"/>
    </location>
</feature>
<feature type="topological domain" description="Extracellular" evidence="2">
    <location>
        <begin position="130"/>
        <end position="585"/>
    </location>
</feature>
<feature type="transmembrane region" description="Helical; Name=2" evidence="4">
    <location>
        <begin position="586"/>
        <end position="606"/>
    </location>
</feature>
<feature type="topological domain" description="Cytoplasmic" evidence="2">
    <location>
        <begin position="607"/>
        <end position="692"/>
    </location>
</feature>
<feature type="region of interest" description="Disordered" evidence="5">
    <location>
        <begin position="1"/>
        <end position="67"/>
    </location>
</feature>
<feature type="region of interest" description="Gating release of inhibition by proteolysis (GRIP); protease-sensitive region that is responsible for the proteolytic activation of the channel" evidence="1">
    <location>
        <begin position="198"/>
        <end position="266"/>
    </location>
</feature>
<feature type="region of interest" description="Disordered" evidence="5">
    <location>
        <begin position="627"/>
        <end position="692"/>
    </location>
</feature>
<feature type="short sequence motif" description="PY motif; recruits WW domain-containing proteins and is thereby required for ubiquitination and inhibition of the channel by NEDD4 and NEDD4L" evidence="1">
    <location>
        <begin position="663"/>
        <end position="667"/>
    </location>
</feature>
<feature type="compositionally biased region" description="Low complexity" evidence="5">
    <location>
        <begin position="56"/>
        <end position="65"/>
    </location>
</feature>
<feature type="compositionally biased region" description="Polar residues" evidence="5">
    <location>
        <begin position="628"/>
        <end position="637"/>
    </location>
</feature>
<feature type="compositionally biased region" description="Pro residues" evidence="5">
    <location>
        <begin position="653"/>
        <end position="666"/>
    </location>
</feature>
<feature type="compositionally biased region" description="Low complexity" evidence="5">
    <location>
        <begin position="682"/>
        <end position="692"/>
    </location>
</feature>
<feature type="site" description="Cleavage by Furin" evidence="3">
    <location>
        <begin position="201"/>
        <end position="202"/>
    </location>
</feature>
<feature type="site" description="Cleavage by Furin" evidence="3">
    <location>
        <begin position="227"/>
        <end position="228"/>
    </location>
</feature>
<feature type="disulfide bond" evidence="1">
    <location>
        <begin position="156"/>
        <end position="328"/>
    </location>
</feature>
<feature type="disulfide bond" evidence="1">
    <location>
        <begin position="252"/>
        <end position="259"/>
    </location>
</feature>
<feature type="disulfide bond" evidence="1">
    <location>
        <begin position="305"/>
        <end position="312"/>
    </location>
</feature>
<feature type="disulfide bond" evidence="1">
    <location>
        <begin position="417"/>
        <end position="502"/>
    </location>
</feature>
<feature type="disulfide bond" evidence="1">
    <location>
        <begin position="439"/>
        <end position="498"/>
    </location>
</feature>
<feature type="disulfide bond" evidence="1">
    <location>
        <begin position="439"/>
        <end position="479"/>
    </location>
</feature>
<feature type="disulfide bond" evidence="1">
    <location>
        <begin position="443"/>
        <end position="494"/>
    </location>
</feature>
<feature type="disulfide bond" evidence="1">
    <location>
        <begin position="452"/>
        <end position="502"/>
    </location>
</feature>
<feature type="disulfide bond" evidence="1">
    <location>
        <begin position="452"/>
        <end position="479"/>
    </location>
</feature>
<feature type="disulfide bond" evidence="1">
    <location>
        <begin position="454"/>
        <end position="468"/>
    </location>
</feature>
<protein>
    <recommendedName>
        <fullName evidence="1">Epithelial sodium channel subunit alpha</fullName>
    </recommendedName>
    <alternativeName>
        <fullName evidence="1">Amiloride-sensitive sodium channel subunit alpha</fullName>
    </alternativeName>
</protein>
<name>SCNNA_PANTR</name>
<dbReference type="EMBL" id="AACZ03089625">
    <property type="status" value="NOT_ANNOTATED_CDS"/>
    <property type="molecule type" value="Genomic_DNA"/>
</dbReference>
<dbReference type="EMBL" id="AACZ03089626">
    <property type="status" value="NOT_ANNOTATED_CDS"/>
    <property type="molecule type" value="Genomic_DNA"/>
</dbReference>
<dbReference type="EMBL" id="AACZ03089627">
    <property type="status" value="NOT_ANNOTATED_CDS"/>
    <property type="molecule type" value="Genomic_DNA"/>
</dbReference>
<dbReference type="EMBL" id="AACZ03089628">
    <property type="status" value="NOT_ANNOTATED_CDS"/>
    <property type="molecule type" value="Genomic_DNA"/>
</dbReference>
<dbReference type="EMBL" id="AACZ03089629">
    <property type="status" value="NOT_ANNOTATED_CDS"/>
    <property type="molecule type" value="Genomic_DNA"/>
</dbReference>
<dbReference type="EMBL" id="AACZ03089630">
    <property type="status" value="NOT_ANNOTATED_CDS"/>
    <property type="molecule type" value="Genomic_DNA"/>
</dbReference>
<dbReference type="SMR" id="H2Q5A1"/>
<dbReference type="FunCoup" id="H2Q5A1">
    <property type="interactions" value="152"/>
</dbReference>
<dbReference type="STRING" id="9598.ENSPTRP00000064198"/>
<dbReference type="PaxDb" id="9598-ENSPTRP00000007816"/>
<dbReference type="Ensembl" id="ENSPTRT00000097030.1">
    <property type="protein sequence ID" value="ENSPTRP00000064198.1"/>
    <property type="gene ID" value="ENSPTRG00000004571.6"/>
</dbReference>
<dbReference type="VGNC" id="VGNC:13442">
    <property type="gene designation" value="SCNN1A"/>
</dbReference>
<dbReference type="eggNOG" id="KOG4294">
    <property type="taxonomic scope" value="Eukaryota"/>
</dbReference>
<dbReference type="GeneTree" id="ENSGT00940000160952"/>
<dbReference type="InParanoid" id="H2Q5A1"/>
<dbReference type="OMA" id="MRQCKQE"/>
<dbReference type="Proteomes" id="UP000002277">
    <property type="component" value="Chromosome 12"/>
</dbReference>
<dbReference type="Bgee" id="ENSPTRG00000004571">
    <property type="expression patterns" value="Expressed in cortex of kidney and 13 other cell types or tissues"/>
</dbReference>
<dbReference type="GO" id="GO:0001669">
    <property type="term" value="C:acrosomal vesicle"/>
    <property type="evidence" value="ECO:0000250"/>
    <property type="project" value="UniProtKB"/>
</dbReference>
<dbReference type="GO" id="GO:0016324">
    <property type="term" value="C:apical plasma membrane"/>
    <property type="evidence" value="ECO:0000250"/>
    <property type="project" value="UniProtKB"/>
</dbReference>
<dbReference type="GO" id="GO:0060170">
    <property type="term" value="C:ciliary membrane"/>
    <property type="evidence" value="ECO:0007669"/>
    <property type="project" value="Ensembl"/>
</dbReference>
<dbReference type="GO" id="GO:0005737">
    <property type="term" value="C:cytoplasm"/>
    <property type="evidence" value="ECO:0000250"/>
    <property type="project" value="UniProtKB"/>
</dbReference>
<dbReference type="GO" id="GO:0005829">
    <property type="term" value="C:cytosol"/>
    <property type="evidence" value="ECO:0007669"/>
    <property type="project" value="Ensembl"/>
</dbReference>
<dbReference type="GO" id="GO:0009897">
    <property type="term" value="C:external side of plasma membrane"/>
    <property type="evidence" value="ECO:0007669"/>
    <property type="project" value="Ensembl"/>
</dbReference>
<dbReference type="GO" id="GO:0070062">
    <property type="term" value="C:extracellular exosome"/>
    <property type="evidence" value="ECO:0007669"/>
    <property type="project" value="Ensembl"/>
</dbReference>
<dbReference type="GO" id="GO:0005886">
    <property type="term" value="C:plasma membrane"/>
    <property type="evidence" value="ECO:0000318"/>
    <property type="project" value="GO_Central"/>
</dbReference>
<dbReference type="GO" id="GO:0034706">
    <property type="term" value="C:sodium channel complex"/>
    <property type="evidence" value="ECO:0000318"/>
    <property type="project" value="GO_Central"/>
</dbReference>
<dbReference type="GO" id="GO:0097228">
    <property type="term" value="C:sperm principal piece"/>
    <property type="evidence" value="ECO:0000250"/>
    <property type="project" value="UniProtKB"/>
</dbReference>
<dbReference type="GO" id="GO:0015280">
    <property type="term" value="F:ligand-gated sodium channel activity"/>
    <property type="evidence" value="ECO:0000318"/>
    <property type="project" value="GO_Central"/>
</dbReference>
<dbReference type="GO" id="GO:0050699">
    <property type="term" value="F:WW domain binding"/>
    <property type="evidence" value="ECO:0007669"/>
    <property type="project" value="Ensembl"/>
</dbReference>
<dbReference type="GO" id="GO:0071468">
    <property type="term" value="P:cellular response to acidic pH"/>
    <property type="evidence" value="ECO:0007669"/>
    <property type="project" value="Ensembl"/>
</dbReference>
<dbReference type="GO" id="GO:1904045">
    <property type="term" value="P:cellular response to aldosterone"/>
    <property type="evidence" value="ECO:0007669"/>
    <property type="project" value="Ensembl"/>
</dbReference>
<dbReference type="GO" id="GO:0006883">
    <property type="term" value="P:intracellular sodium ion homeostasis"/>
    <property type="evidence" value="ECO:0007669"/>
    <property type="project" value="Ensembl"/>
</dbReference>
<dbReference type="GO" id="GO:0050891">
    <property type="term" value="P:multicellular organismal-level water homeostasis"/>
    <property type="evidence" value="ECO:0007669"/>
    <property type="project" value="Ensembl"/>
</dbReference>
<dbReference type="GO" id="GO:0098719">
    <property type="term" value="P:sodium ion import across plasma membrane"/>
    <property type="evidence" value="ECO:0007669"/>
    <property type="project" value="Ensembl"/>
</dbReference>
<dbReference type="GO" id="GO:0035725">
    <property type="term" value="P:sodium ion transmembrane transport"/>
    <property type="evidence" value="ECO:0000250"/>
    <property type="project" value="UniProtKB"/>
</dbReference>
<dbReference type="FunFam" id="2.60.470.10:FF:000002">
    <property type="entry name" value="Amiloride-sensitive sodium channel subunit alpha"/>
    <property type="match status" value="1"/>
</dbReference>
<dbReference type="FunFam" id="1.10.287.770:FF:000002">
    <property type="entry name" value="Amiloride-sensitive sodium channel subunit beta 1"/>
    <property type="match status" value="1"/>
</dbReference>
<dbReference type="Gene3D" id="2.60.470.10">
    <property type="entry name" value="Acid-sensing ion channels like domains"/>
    <property type="match status" value="1"/>
</dbReference>
<dbReference type="Gene3D" id="1.10.287.770">
    <property type="entry name" value="YojJ-like"/>
    <property type="match status" value="1"/>
</dbReference>
<dbReference type="InterPro" id="IPR001873">
    <property type="entry name" value="ENaC"/>
</dbReference>
<dbReference type="InterPro" id="IPR004724">
    <property type="entry name" value="ENaC_chordates"/>
</dbReference>
<dbReference type="InterPro" id="IPR020903">
    <property type="entry name" value="ENaC_CS"/>
</dbReference>
<dbReference type="NCBIfam" id="TIGR00859">
    <property type="entry name" value="ENaC"/>
    <property type="match status" value="1"/>
</dbReference>
<dbReference type="PANTHER" id="PTHR11690:SF124">
    <property type="entry name" value="AMILORIDE-SENSITIVE SODIUM CHANNEL SUBUNIT ALPHA"/>
    <property type="match status" value="1"/>
</dbReference>
<dbReference type="PANTHER" id="PTHR11690">
    <property type="entry name" value="AMILORIDE-SENSITIVE SODIUM CHANNEL-RELATED"/>
    <property type="match status" value="1"/>
</dbReference>
<dbReference type="Pfam" id="PF00858">
    <property type="entry name" value="ASC"/>
    <property type="match status" value="1"/>
</dbReference>
<dbReference type="PRINTS" id="PR01078">
    <property type="entry name" value="AMINACHANNEL"/>
</dbReference>
<dbReference type="PROSITE" id="PS01206">
    <property type="entry name" value="ASC"/>
    <property type="match status" value="1"/>
</dbReference>
<keyword id="KW-1003">Cell membrane</keyword>
<keyword id="KW-0966">Cell projection</keyword>
<keyword id="KW-0969">Cilium</keyword>
<keyword id="KW-0963">Cytoplasm</keyword>
<keyword id="KW-0968">Cytoplasmic vesicle</keyword>
<keyword id="KW-1015">Disulfide bond</keyword>
<keyword id="KW-0282">Flagellum</keyword>
<keyword id="KW-0325">Glycoprotein</keyword>
<keyword id="KW-0407">Ion channel</keyword>
<keyword id="KW-0406">Ion transport</keyword>
<keyword id="KW-0472">Membrane</keyword>
<keyword id="KW-1185">Reference proteome</keyword>
<keyword id="KW-0915">Sodium</keyword>
<keyword id="KW-0894">Sodium channel</keyword>
<keyword id="KW-0739">Sodium transport</keyword>
<keyword id="KW-0812">Transmembrane</keyword>
<keyword id="KW-1133">Transmembrane helix</keyword>
<keyword id="KW-0813">Transport</keyword>
<keyword id="KW-0832">Ubl conjugation</keyword>